<comment type="function">
    <text evidence="1">Is required not only for elongation of protein synthesis but also for the initiation of all mRNA translation through initiator tRNA(fMet) aminoacylation.</text>
</comment>
<comment type="catalytic activity">
    <reaction>
        <text>tRNA(Met) + L-methionine + ATP = L-methionyl-tRNA(Met) + AMP + diphosphate</text>
        <dbReference type="Rhea" id="RHEA:13481"/>
        <dbReference type="Rhea" id="RHEA-COMP:9667"/>
        <dbReference type="Rhea" id="RHEA-COMP:9698"/>
        <dbReference type="ChEBI" id="CHEBI:30616"/>
        <dbReference type="ChEBI" id="CHEBI:33019"/>
        <dbReference type="ChEBI" id="CHEBI:57844"/>
        <dbReference type="ChEBI" id="CHEBI:78442"/>
        <dbReference type="ChEBI" id="CHEBI:78530"/>
        <dbReference type="ChEBI" id="CHEBI:456215"/>
        <dbReference type="EC" id="6.1.1.10"/>
    </reaction>
</comment>
<comment type="cofactor">
    <cofactor evidence="1">
        <name>Zn(2+)</name>
        <dbReference type="ChEBI" id="CHEBI:29105"/>
    </cofactor>
    <text evidence="1">Binds 1 zinc ion per subunit.</text>
</comment>
<comment type="subunit">
    <text evidence="1">Monomer.</text>
</comment>
<comment type="subcellular location">
    <subcellularLocation>
        <location evidence="1">Cytoplasm</location>
    </subcellularLocation>
</comment>
<comment type="similarity">
    <text evidence="2">Belongs to the class-I aminoacyl-tRNA synthetase family. MetG type 2A subfamily.</text>
</comment>
<accession>P47267</accession>
<accession>Q49339</accession>
<accession>Q49473</accession>
<proteinExistence type="inferred from homology"/>
<sequence length="512" mass="60007">MKRCYITTPIYYASGKPHIGHAFTTILADVIKRFKIQNGYEAFLLVGSDEHGNKIESKAKSLNLDPKTFVDINAQAFKLMWKTLNISFDHFIRTTDEIHKQQVQKTFQDLYDKKLIYQSEWKGAYCVECEQNYFTFNKQTMLCEIGHNLSLVQEPCWFISFSSTKNWIETTIGKNQLNIIPKSRASELKNNFINNGLNDLALTRKNVTWGIKVPFDPNQTIYVWFDALFSYITNLGFRNGDPNFIKWWNNDNKEREVIHLISREITRFHCIYWPIFLHLLDIKLPTQFLSHGWIVDGEGRKMSKSLNNVISPEQLIDQFGVDGTRYCLLKEMRLDKDNRCSVSILKEIYNADLANSFGNHVSRTFGMIKKYLNGKLEYQIITDNALQKIMILIDESIVQFDHYFNSYEFYRAINLLLKIVFELSKLIDDFKPWELFKNQEFSLLKQLLFTCVRCVQVCYVLLTPILVNTASKVFHLFNFADDACRKDQLRDATLLKKIIISNSMEVLFKRVD</sequence>
<feature type="chain" id="PRO_0000139228" description="Methionine--tRNA ligase">
    <location>
        <begin position="1"/>
        <end position="512"/>
    </location>
</feature>
<feature type="short sequence motif" description="'HIGH' region">
    <location>
        <begin position="11"/>
        <end position="21"/>
    </location>
</feature>
<feature type="short sequence motif" description="'KMSKS' region">
    <location>
        <begin position="301"/>
        <end position="305"/>
    </location>
</feature>
<feature type="binding site" evidence="1">
    <location>
        <position position="126"/>
    </location>
    <ligand>
        <name>Zn(2+)</name>
        <dbReference type="ChEBI" id="CHEBI:29105"/>
    </ligand>
</feature>
<feature type="binding site" evidence="1">
    <location>
        <position position="129"/>
    </location>
    <ligand>
        <name>Zn(2+)</name>
        <dbReference type="ChEBI" id="CHEBI:29105"/>
    </ligand>
</feature>
<feature type="binding site" evidence="1">
    <location>
        <position position="143"/>
    </location>
    <ligand>
        <name>Zn(2+)</name>
        <dbReference type="ChEBI" id="CHEBI:29105"/>
    </ligand>
</feature>
<feature type="binding site" evidence="1">
    <location>
        <position position="147"/>
    </location>
    <ligand>
        <name>Zn(2+)</name>
        <dbReference type="ChEBI" id="CHEBI:29105"/>
    </ligand>
</feature>
<feature type="binding site" evidence="1">
    <location>
        <position position="304"/>
    </location>
    <ligand>
        <name>ATP</name>
        <dbReference type="ChEBI" id="CHEBI:30616"/>
    </ligand>
</feature>
<feature type="sequence conflict" description="In Ref. 3." evidence="2" ref="3">
    <original>VLF</original>
    <variation>FYL</variation>
    <location>
        <begin position="506"/>
        <end position="508"/>
    </location>
</feature>
<name>SYM_MYCGE</name>
<dbReference type="EC" id="6.1.1.10"/>
<dbReference type="EMBL" id="L43967">
    <property type="protein sequence ID" value="AAC71237.1"/>
    <property type="molecule type" value="Genomic_DNA"/>
</dbReference>
<dbReference type="EMBL" id="U02229">
    <property type="protein sequence ID" value="AAA03382.2"/>
    <property type="molecule type" value="Genomic_DNA"/>
</dbReference>
<dbReference type="EMBL" id="X61513">
    <property type="protein sequence ID" value="CAA43727.1"/>
    <property type="molecule type" value="Genomic_DNA"/>
</dbReference>
<dbReference type="PIR" id="C64202">
    <property type="entry name" value="C64202"/>
</dbReference>
<dbReference type="RefSeq" id="WP_009885919.1">
    <property type="nucleotide sequence ID" value="NC_000908.2"/>
</dbReference>
<dbReference type="SMR" id="P47267"/>
<dbReference type="FunCoup" id="P47267">
    <property type="interactions" value="184"/>
</dbReference>
<dbReference type="STRING" id="243273.MG_021"/>
<dbReference type="GeneID" id="88282136"/>
<dbReference type="KEGG" id="mge:MG_021"/>
<dbReference type="eggNOG" id="COG0143">
    <property type="taxonomic scope" value="Bacteria"/>
</dbReference>
<dbReference type="HOGENOM" id="CLU_009710_9_4_14"/>
<dbReference type="InParanoid" id="P47267"/>
<dbReference type="OrthoDB" id="9810191at2"/>
<dbReference type="BioCyc" id="MGEN243273:G1GJ2-21-MONOMER"/>
<dbReference type="Proteomes" id="UP000000807">
    <property type="component" value="Chromosome"/>
</dbReference>
<dbReference type="GO" id="GO:0005737">
    <property type="term" value="C:cytoplasm"/>
    <property type="evidence" value="ECO:0007669"/>
    <property type="project" value="UniProtKB-SubCell"/>
</dbReference>
<dbReference type="GO" id="GO:0005524">
    <property type="term" value="F:ATP binding"/>
    <property type="evidence" value="ECO:0007669"/>
    <property type="project" value="UniProtKB-UniRule"/>
</dbReference>
<dbReference type="GO" id="GO:0046872">
    <property type="term" value="F:metal ion binding"/>
    <property type="evidence" value="ECO:0007669"/>
    <property type="project" value="UniProtKB-KW"/>
</dbReference>
<dbReference type="GO" id="GO:0004825">
    <property type="term" value="F:methionine-tRNA ligase activity"/>
    <property type="evidence" value="ECO:0000318"/>
    <property type="project" value="GO_Central"/>
</dbReference>
<dbReference type="GO" id="GO:0006431">
    <property type="term" value="P:methionyl-tRNA aminoacylation"/>
    <property type="evidence" value="ECO:0000318"/>
    <property type="project" value="GO_Central"/>
</dbReference>
<dbReference type="CDD" id="cd00814">
    <property type="entry name" value="MetRS_core"/>
    <property type="match status" value="1"/>
</dbReference>
<dbReference type="Gene3D" id="2.170.220.10">
    <property type="match status" value="1"/>
</dbReference>
<dbReference type="Gene3D" id="3.40.50.620">
    <property type="entry name" value="HUPs"/>
    <property type="match status" value="1"/>
</dbReference>
<dbReference type="Gene3D" id="1.10.730.10">
    <property type="entry name" value="Isoleucyl-tRNA Synthetase, Domain 1"/>
    <property type="match status" value="1"/>
</dbReference>
<dbReference type="HAMAP" id="MF_01228">
    <property type="entry name" value="Met_tRNA_synth_type2"/>
    <property type="match status" value="1"/>
</dbReference>
<dbReference type="InterPro" id="IPR014758">
    <property type="entry name" value="Met-tRNA_synth"/>
</dbReference>
<dbReference type="InterPro" id="IPR023457">
    <property type="entry name" value="Met-tRNA_synth_2"/>
</dbReference>
<dbReference type="InterPro" id="IPR015413">
    <property type="entry name" value="Methionyl/Leucyl_tRNA_Synth"/>
</dbReference>
<dbReference type="InterPro" id="IPR033911">
    <property type="entry name" value="MetRS_core"/>
</dbReference>
<dbReference type="InterPro" id="IPR014729">
    <property type="entry name" value="Rossmann-like_a/b/a_fold"/>
</dbReference>
<dbReference type="InterPro" id="IPR009080">
    <property type="entry name" value="tRNAsynth_Ia_anticodon-bd"/>
</dbReference>
<dbReference type="NCBIfam" id="TIGR00398">
    <property type="entry name" value="metG"/>
    <property type="match status" value="1"/>
</dbReference>
<dbReference type="PANTHER" id="PTHR43326:SF1">
    <property type="entry name" value="METHIONINE--TRNA LIGASE, MITOCHONDRIAL"/>
    <property type="match status" value="1"/>
</dbReference>
<dbReference type="PANTHER" id="PTHR43326">
    <property type="entry name" value="METHIONYL-TRNA SYNTHETASE"/>
    <property type="match status" value="1"/>
</dbReference>
<dbReference type="Pfam" id="PF09334">
    <property type="entry name" value="tRNA-synt_1g"/>
    <property type="match status" value="2"/>
</dbReference>
<dbReference type="PRINTS" id="PR01041">
    <property type="entry name" value="TRNASYNTHMET"/>
</dbReference>
<dbReference type="SUPFAM" id="SSF47323">
    <property type="entry name" value="Anticodon-binding domain of a subclass of class I aminoacyl-tRNA synthetases"/>
    <property type="match status" value="1"/>
</dbReference>
<dbReference type="SUPFAM" id="SSF52374">
    <property type="entry name" value="Nucleotidylyl transferase"/>
    <property type="match status" value="1"/>
</dbReference>
<evidence type="ECO:0000250" key="1"/>
<evidence type="ECO:0000305" key="2"/>
<organism>
    <name type="scientific">Mycoplasma genitalium (strain ATCC 33530 / DSM 19775 / NCTC 10195 / G37)</name>
    <name type="common">Mycoplasmoides genitalium</name>
    <dbReference type="NCBI Taxonomy" id="243273"/>
    <lineage>
        <taxon>Bacteria</taxon>
        <taxon>Bacillati</taxon>
        <taxon>Mycoplasmatota</taxon>
        <taxon>Mycoplasmoidales</taxon>
        <taxon>Mycoplasmoidaceae</taxon>
        <taxon>Mycoplasmoides</taxon>
    </lineage>
</organism>
<keyword id="KW-0030">Aminoacyl-tRNA synthetase</keyword>
<keyword id="KW-0067">ATP-binding</keyword>
<keyword id="KW-0963">Cytoplasm</keyword>
<keyword id="KW-0436">Ligase</keyword>
<keyword id="KW-0479">Metal-binding</keyword>
<keyword id="KW-0547">Nucleotide-binding</keyword>
<keyword id="KW-0648">Protein biosynthesis</keyword>
<keyword id="KW-1185">Reference proteome</keyword>
<keyword id="KW-0862">Zinc</keyword>
<reference key="1">
    <citation type="journal article" date="1995" name="Science">
        <title>The minimal gene complement of Mycoplasma genitalium.</title>
        <authorList>
            <person name="Fraser C.M."/>
            <person name="Gocayne J.D."/>
            <person name="White O."/>
            <person name="Adams M.D."/>
            <person name="Clayton R.A."/>
            <person name="Fleischmann R.D."/>
            <person name="Bult C.J."/>
            <person name="Kerlavage A.R."/>
            <person name="Sutton G.G."/>
            <person name="Kelley J.M."/>
            <person name="Fritchman J.L."/>
            <person name="Weidman J.F."/>
            <person name="Small K.V."/>
            <person name="Sandusky M."/>
            <person name="Fuhrmann J.L."/>
            <person name="Nguyen D.T."/>
            <person name="Utterback T.R."/>
            <person name="Saudek D.M."/>
            <person name="Phillips C.A."/>
            <person name="Merrick J.M."/>
            <person name="Tomb J.-F."/>
            <person name="Dougherty B.A."/>
            <person name="Bott K.F."/>
            <person name="Hu P.-C."/>
            <person name="Lucier T.S."/>
            <person name="Peterson S.N."/>
            <person name="Smith H.O."/>
            <person name="Hutchison C.A. III"/>
            <person name="Venter J.C."/>
        </authorList>
    </citation>
    <scope>NUCLEOTIDE SEQUENCE [LARGE SCALE GENOMIC DNA]</scope>
    <source>
        <strain>ATCC 33530 / DSM 19775 / NCTC 10195 / G37</strain>
    </source>
</reference>
<reference key="2">
    <citation type="journal article" date="1993" name="J. Bacteriol.">
        <title>A survey of the Mycoplasma genitalium genome by using random sequencing.</title>
        <authorList>
            <person name="Peterson S.N."/>
            <person name="Hu P.-C."/>
            <person name="Bott K.F."/>
            <person name="Hutchison C.A. III"/>
        </authorList>
    </citation>
    <scope>NUCLEOTIDE SEQUENCE [GENOMIC DNA] OF 1-53</scope>
    <source>
        <strain>ATCC 33530 / DSM 19775 / NCTC 10195 / G37</strain>
    </source>
</reference>
<reference key="3">
    <citation type="journal article" date="1991" name="Nucleic Acids Res.">
        <title>A random sequencing approach for placing markers on the physical map of Mycoplasma genitalium.</title>
        <authorList>
            <person name="Peterson S.N."/>
            <person name="Schramm N."/>
            <person name="Hu P.-C."/>
            <person name="Bott K.F."/>
            <person name="Hutchison C.A. III"/>
        </authorList>
    </citation>
    <scope>NUCLEOTIDE SEQUENCE [GENOMIC DNA] OF 440-508</scope>
    <source>
        <strain>ATCC 33530 / DSM 19775 / NCTC 10195 / G37</strain>
    </source>
</reference>
<protein>
    <recommendedName>
        <fullName>Methionine--tRNA ligase</fullName>
        <ecNumber>6.1.1.10</ecNumber>
    </recommendedName>
    <alternativeName>
        <fullName>Methionyl-tRNA synthetase</fullName>
        <shortName>MetRS</shortName>
    </alternativeName>
</protein>
<gene>
    <name type="primary">metG</name>
    <name type="synonym">metS</name>
    <name type="ordered locus">MG021</name>
</gene>